<sequence length="790" mass="89283">MKRVLIPGVILCGADVAQAVDDKNMYMHFFEEMTVYAPVPVPVNGNTHYTSESIERLPTGNGNISDLLRTNPAVRMDSTQSTSLNQGDIRPEKISIHGASPYQNAYLIDGISATNNLNPANESDASSATNISGMSQGYYLDVSLLDNVTLYDSFVPVEFGRFNGGVIDAKIKRFNADDSKVKLGYRTTRSDWLTSHIDENNKSAFNQGSSGSTYYSPDFKKNFYTLSFNQELADNFGVTAGLSRRQSDITRADYVSNDGIVAGRAQYKNVIDTALSKFTWFASDRFTHDLTLKYTGSSRDYNTSTFPQSDREMGNKSYGLAWDMDTQLAWAKLRTTVGWDHISDYTRHDHDIWYTELSCTYGDITGRCTRGGLGHISQAVDNYTFKTRLDWQKFAVGNVSHQPYFGAEYIYSDAWTERHNQSESYVINAAGKKTNHTIYHKGKGRLGIDNYTLYMADRISWRNVSLMPGVRYDYDNYLSNHNISPRFMTEWDIFANQTSMITAGYNRYYGGNILDMGLRDIRNSWTESVSGNKTLTRYQDLKTPYNDELAMGLQQKIGKNVIARANYVYREAHDQISKSSRTDSATKTTITEYNNDGKTKTHSFSLSFELAEPLHIRQVDINPQIVFSYIKSKGNLSLNNGYEESNTGDNQVVYNGNLVSYDSVPVADFNNPLKISLNMDFTHQPSGLVWANTLAWQEARKARIILGKTNAQYISEYSDYKQYVDEKLDSSLTWDTRLSWTPQFLQQQNLTISADILNVLDSKTAVDTTNTGVATYASGRTFWLDVSMKF</sequence>
<dbReference type="EMBL" id="X71917">
    <property type="protein sequence ID" value="CAA50733.1"/>
    <property type="molecule type" value="Genomic_DNA"/>
</dbReference>
<dbReference type="EMBL" id="U00096">
    <property type="protein sequence ID" value="AAC74568.1"/>
    <property type="molecule type" value="Genomic_DNA"/>
</dbReference>
<dbReference type="EMBL" id="AP009048">
    <property type="protein sequence ID" value="BAA15166.1"/>
    <property type="molecule type" value="Genomic_DNA"/>
</dbReference>
<dbReference type="PIR" id="B64903">
    <property type="entry name" value="B64903"/>
</dbReference>
<dbReference type="RefSeq" id="NP_416012.1">
    <property type="nucleotide sequence ID" value="NC_000913.3"/>
</dbReference>
<dbReference type="RefSeq" id="WP_000832437.1">
    <property type="nucleotide sequence ID" value="NZ_SSZK01000001.1"/>
</dbReference>
<dbReference type="PDB" id="6OFR">
    <property type="method" value="X-ray"/>
    <property type="resolution" value="2.40 A"/>
    <property type="chains" value="A=29-790"/>
</dbReference>
<dbReference type="PDBsum" id="6OFR"/>
<dbReference type="SMR" id="P31827"/>
<dbReference type="BioGRID" id="4260786">
    <property type="interactions" value="155"/>
</dbReference>
<dbReference type="DIP" id="DIP-11661N"/>
<dbReference type="FunCoup" id="P31827">
    <property type="interactions" value="19"/>
</dbReference>
<dbReference type="IntAct" id="P31827">
    <property type="interactions" value="1"/>
</dbReference>
<dbReference type="STRING" id="511145.b1495"/>
<dbReference type="TCDB" id="1.B.14.19.1">
    <property type="family name" value="the outer membrane receptor (omr) family"/>
</dbReference>
<dbReference type="jPOST" id="P31827"/>
<dbReference type="PaxDb" id="511145-b1495"/>
<dbReference type="EnsemblBacteria" id="AAC74568">
    <property type="protein sequence ID" value="AAC74568"/>
    <property type="gene ID" value="b1495"/>
</dbReference>
<dbReference type="GeneID" id="945961"/>
<dbReference type="KEGG" id="ecj:JW1490"/>
<dbReference type="KEGG" id="eco:b1495"/>
<dbReference type="KEGG" id="ecoc:C3026_08660"/>
<dbReference type="PATRIC" id="fig|1411691.4.peg.771"/>
<dbReference type="EchoBASE" id="EB1694"/>
<dbReference type="eggNOG" id="COG4771">
    <property type="taxonomic scope" value="Bacteria"/>
</dbReference>
<dbReference type="HOGENOM" id="CLU_012991_1_0_6"/>
<dbReference type="InParanoid" id="P31827"/>
<dbReference type="OMA" id="REFWLEV"/>
<dbReference type="OrthoDB" id="9766643at2"/>
<dbReference type="PhylomeDB" id="P31827"/>
<dbReference type="BioCyc" id="EcoCyc:EG11743-MONOMER"/>
<dbReference type="PRO" id="PR:P31827"/>
<dbReference type="Proteomes" id="UP000000625">
    <property type="component" value="Chromosome"/>
</dbReference>
<dbReference type="GO" id="GO:0009279">
    <property type="term" value="C:cell outer membrane"/>
    <property type="evidence" value="ECO:0000314"/>
    <property type="project" value="EcoCyc"/>
</dbReference>
<dbReference type="Gene3D" id="2.40.170.20">
    <property type="entry name" value="TonB-dependent receptor, beta-barrel domain"/>
    <property type="match status" value="1"/>
</dbReference>
<dbReference type="Gene3D" id="2.170.130.10">
    <property type="entry name" value="TonB-dependent receptor, plug domain"/>
    <property type="match status" value="1"/>
</dbReference>
<dbReference type="InterPro" id="IPR012910">
    <property type="entry name" value="Plug_dom"/>
</dbReference>
<dbReference type="InterPro" id="IPR037066">
    <property type="entry name" value="Plug_dom_sf"/>
</dbReference>
<dbReference type="InterPro" id="IPR039426">
    <property type="entry name" value="TonB-dep_rcpt-like"/>
</dbReference>
<dbReference type="InterPro" id="IPR036942">
    <property type="entry name" value="TonB_rcpt_b-brl_sf"/>
</dbReference>
<dbReference type="Pfam" id="PF07715">
    <property type="entry name" value="Plug"/>
    <property type="match status" value="1"/>
</dbReference>
<dbReference type="SUPFAM" id="SSF56935">
    <property type="entry name" value="Porins"/>
    <property type="match status" value="1"/>
</dbReference>
<dbReference type="PROSITE" id="PS52016">
    <property type="entry name" value="TONB_DEPENDENT_REC_3"/>
    <property type="match status" value="1"/>
</dbReference>
<comment type="subcellular location">
    <subcellularLocation>
        <location evidence="1">Cell outer membrane</location>
        <topology evidence="1">Multi-pass membrane protein</topology>
    </subcellularLocation>
</comment>
<comment type="similarity">
    <text evidence="1">Belongs to the TonB-dependent receptor family.</text>
</comment>
<keyword id="KW-0002">3D-structure</keyword>
<keyword id="KW-0998">Cell outer membrane</keyword>
<keyword id="KW-0472">Membrane</keyword>
<keyword id="KW-1185">Reference proteome</keyword>
<keyword id="KW-0812">Transmembrane</keyword>
<keyword id="KW-1134">Transmembrane beta strand</keyword>
<keyword id="KW-0813">Transport</keyword>
<reference key="1">
    <citation type="journal article" date="1996" name="Biochimie">
        <title>Sequence and functional analysis of an Escherichia coli DNA fragment able to complement pqqE and pqqF mutants from Methylobacterium organophilum.</title>
        <authorList>
            <person name="Turlin E."/>
            <person name="Gasser F."/>
            <person name="Biville F."/>
        </authorList>
    </citation>
    <scope>NUCLEOTIDE SEQUENCE [GENOMIC DNA]</scope>
    <source>
        <strain>K12</strain>
    </source>
</reference>
<reference key="2">
    <citation type="journal article" date="1996" name="DNA Res.">
        <title>A 570-kb DNA sequence of the Escherichia coli K-12 genome corresponding to the 28.0-40.1 min region on the linkage map.</title>
        <authorList>
            <person name="Aiba H."/>
            <person name="Baba T."/>
            <person name="Fujita K."/>
            <person name="Hayashi K."/>
            <person name="Inada T."/>
            <person name="Isono K."/>
            <person name="Itoh T."/>
            <person name="Kasai H."/>
            <person name="Kashimoto K."/>
            <person name="Kimura S."/>
            <person name="Kitakawa M."/>
            <person name="Kitagawa M."/>
            <person name="Makino K."/>
            <person name="Miki T."/>
            <person name="Mizobuchi K."/>
            <person name="Mori H."/>
            <person name="Mori T."/>
            <person name="Motomura K."/>
            <person name="Nakade S."/>
            <person name="Nakamura Y."/>
            <person name="Nashimoto H."/>
            <person name="Nishio Y."/>
            <person name="Oshima T."/>
            <person name="Saito N."/>
            <person name="Sampei G."/>
            <person name="Seki Y."/>
            <person name="Sivasundaram S."/>
            <person name="Tagami H."/>
            <person name="Takeda J."/>
            <person name="Takemoto K."/>
            <person name="Takeuchi Y."/>
            <person name="Wada C."/>
            <person name="Yamamoto Y."/>
            <person name="Horiuchi T."/>
        </authorList>
    </citation>
    <scope>NUCLEOTIDE SEQUENCE [LARGE SCALE GENOMIC DNA]</scope>
    <source>
        <strain>K12 / W3110 / ATCC 27325 / DSM 5911</strain>
    </source>
</reference>
<reference key="3">
    <citation type="journal article" date="1997" name="Science">
        <title>The complete genome sequence of Escherichia coli K-12.</title>
        <authorList>
            <person name="Blattner F.R."/>
            <person name="Plunkett G. III"/>
            <person name="Bloch C.A."/>
            <person name="Perna N.T."/>
            <person name="Burland V."/>
            <person name="Riley M."/>
            <person name="Collado-Vides J."/>
            <person name="Glasner J.D."/>
            <person name="Rode C.K."/>
            <person name="Mayhew G.F."/>
            <person name="Gregor J."/>
            <person name="Davis N.W."/>
            <person name="Kirkpatrick H.A."/>
            <person name="Goeden M.A."/>
            <person name="Rose D.J."/>
            <person name="Mau B."/>
            <person name="Shao Y."/>
        </authorList>
    </citation>
    <scope>NUCLEOTIDE SEQUENCE [LARGE SCALE GENOMIC DNA]</scope>
    <source>
        <strain>K12 / MG1655 / ATCC 47076</strain>
    </source>
</reference>
<reference key="4">
    <citation type="journal article" date="2006" name="Mol. Syst. Biol.">
        <title>Highly accurate genome sequences of Escherichia coli K-12 strains MG1655 and W3110.</title>
        <authorList>
            <person name="Hayashi K."/>
            <person name="Morooka N."/>
            <person name="Yamamoto Y."/>
            <person name="Fujita K."/>
            <person name="Isono K."/>
            <person name="Choi S."/>
            <person name="Ohtsubo E."/>
            <person name="Baba T."/>
            <person name="Wanner B.L."/>
            <person name="Mori H."/>
            <person name="Horiuchi T."/>
        </authorList>
    </citation>
    <scope>NUCLEOTIDE SEQUENCE [LARGE SCALE GENOMIC DNA]</scope>
    <source>
        <strain>K12 / W3110 / ATCC 27325 / DSM 5911</strain>
    </source>
</reference>
<proteinExistence type="evidence at protein level"/>
<accession>P31827</accession>
<accession>P77572</accession>
<gene>
    <name type="primary">yddB</name>
    <name type="ordered locus">b1495</name>
    <name type="ordered locus">JW1490</name>
</gene>
<feature type="chain" id="PRO_0000168941" description="Uncharacterized protein YddB">
    <location>
        <begin position="1"/>
        <end position="790"/>
    </location>
</feature>
<feature type="domain" description="TBDR plug" evidence="1">
    <location>
        <begin position="37"/>
        <end position="172"/>
    </location>
</feature>
<feature type="domain" description="TBDR beta-barrel" evidence="1">
    <location>
        <begin position="178"/>
        <end position="790"/>
    </location>
</feature>
<feature type="sequence conflict" description="In Ref. 1." evidence="2" ref="1">
    <original>MKRVLIPGVILCGADVAQAVDD</original>
    <variation>MT</variation>
    <location>
        <begin position="1"/>
        <end position="22"/>
    </location>
</feature>
<feature type="sequence conflict" description="In Ref. 1; CAA50733." evidence="2" ref="1">
    <original>TWFASDRFTHD</original>
    <variation>YLVCQRPLYPR</variation>
    <location>
        <begin position="279"/>
        <end position="289"/>
    </location>
</feature>
<feature type="sequence conflict" description="In Ref. 1; CAA50733." evidence="2" ref="1">
    <original>A</original>
    <variation>T</variation>
    <location>
        <position position="503"/>
    </location>
</feature>
<feature type="sequence conflict" description="In Ref. 1; CAA50733." evidence="2" ref="1">
    <original>TLTRYQDLKTPY</original>
    <variation>NSDALSGFE</variation>
    <location>
        <begin position="534"/>
        <end position="545"/>
    </location>
</feature>
<feature type="sequence conflict" description="In Ref. 1; CAA50733." evidence="2" ref="1">
    <original>HD</original>
    <variation>LV</variation>
    <location>
        <begin position="573"/>
        <end position="574"/>
    </location>
</feature>
<feature type="sequence conflict" description="In Ref. 1; CAA50733." evidence="2" ref="1">
    <original>HI</original>
    <variation>LY</variation>
    <location>
        <begin position="615"/>
        <end position="616"/>
    </location>
</feature>
<feature type="strand" evidence="3">
    <location>
        <begin position="37"/>
        <end position="39"/>
    </location>
</feature>
<feature type="strand" evidence="3">
    <location>
        <begin position="46"/>
        <end position="50"/>
    </location>
</feature>
<feature type="helix" evidence="3">
    <location>
        <begin position="51"/>
        <end position="56"/>
    </location>
</feature>
<feature type="helix" evidence="3">
    <location>
        <begin position="64"/>
        <end position="68"/>
    </location>
</feature>
<feature type="strand" evidence="3">
    <location>
        <begin position="74"/>
        <end position="76"/>
    </location>
</feature>
<feature type="strand" evidence="3">
    <location>
        <begin position="94"/>
        <end position="96"/>
    </location>
</feature>
<feature type="strand" evidence="3">
    <location>
        <begin position="105"/>
        <end position="108"/>
    </location>
</feature>
<feature type="strand" evidence="3">
    <location>
        <begin position="127"/>
        <end position="129"/>
    </location>
</feature>
<feature type="strand" evidence="3">
    <location>
        <begin position="135"/>
        <end position="138"/>
    </location>
</feature>
<feature type="helix" evidence="3">
    <location>
        <begin position="142"/>
        <end position="144"/>
    </location>
</feature>
<feature type="strand" evidence="3">
    <location>
        <begin position="146"/>
        <end position="151"/>
    </location>
</feature>
<feature type="strand" evidence="3">
    <location>
        <begin position="166"/>
        <end position="170"/>
    </location>
</feature>
<feature type="strand" evidence="3">
    <location>
        <begin position="181"/>
        <end position="189"/>
    </location>
</feature>
<feature type="helix" evidence="3">
    <location>
        <begin position="190"/>
        <end position="192"/>
    </location>
</feature>
<feature type="helix" evidence="3">
    <location>
        <begin position="199"/>
        <end position="201"/>
    </location>
</feature>
<feature type="helix" evidence="3">
    <location>
        <begin position="202"/>
        <end position="207"/>
    </location>
</feature>
<feature type="strand" evidence="3">
    <location>
        <begin position="220"/>
        <end position="233"/>
    </location>
</feature>
<feature type="strand" evidence="3">
    <location>
        <begin position="236"/>
        <end position="255"/>
    </location>
</feature>
<feature type="strand" evidence="3">
    <location>
        <begin position="261"/>
        <end position="280"/>
    </location>
</feature>
<feature type="strand" evidence="3">
    <location>
        <begin position="284"/>
        <end position="301"/>
    </location>
</feature>
<feature type="strand" evidence="3">
    <location>
        <begin position="304"/>
        <end position="306"/>
    </location>
</feature>
<feature type="strand" evidence="3">
    <location>
        <begin position="311"/>
        <end position="327"/>
    </location>
</feature>
<feature type="strand" evidence="3">
    <location>
        <begin position="329"/>
        <end position="349"/>
    </location>
</feature>
<feature type="strand" evidence="3">
    <location>
        <begin position="351"/>
        <end position="358"/>
    </location>
</feature>
<feature type="strand" evidence="3">
    <location>
        <begin position="368"/>
        <end position="371"/>
    </location>
</feature>
<feature type="strand" evidence="3">
    <location>
        <begin position="375"/>
        <end position="391"/>
    </location>
</feature>
<feature type="strand" evidence="3">
    <location>
        <begin position="394"/>
        <end position="396"/>
    </location>
</feature>
<feature type="strand" evidence="3">
    <location>
        <begin position="399"/>
        <end position="418"/>
    </location>
</feature>
<feature type="strand" evidence="3">
    <location>
        <begin position="422"/>
        <end position="427"/>
    </location>
</feature>
<feature type="strand" evidence="3">
    <location>
        <begin position="433"/>
        <end position="439"/>
    </location>
</feature>
<feature type="strand" evidence="3">
    <location>
        <begin position="442"/>
        <end position="461"/>
    </location>
</feature>
<feature type="strand" evidence="3">
    <location>
        <begin position="464"/>
        <end position="475"/>
    </location>
</feature>
<feature type="turn" evidence="3">
    <location>
        <begin position="476"/>
        <end position="478"/>
    </location>
</feature>
<feature type="strand" evidence="3">
    <location>
        <begin position="482"/>
        <end position="509"/>
    </location>
</feature>
<feature type="helix" evidence="3">
    <location>
        <begin position="515"/>
        <end position="524"/>
    </location>
</feature>
<feature type="strand" evidence="3">
    <location>
        <begin position="533"/>
        <end position="537"/>
    </location>
</feature>
<feature type="strand" evidence="3">
    <location>
        <begin position="545"/>
        <end position="557"/>
    </location>
</feature>
<feature type="turn" evidence="3">
    <location>
        <begin position="558"/>
        <end position="560"/>
    </location>
</feature>
<feature type="strand" evidence="3">
    <location>
        <begin position="561"/>
        <end position="583"/>
    </location>
</feature>
<feature type="turn" evidence="3">
    <location>
        <begin position="584"/>
        <end position="587"/>
    </location>
</feature>
<feature type="strand" evidence="3">
    <location>
        <begin position="588"/>
        <end position="612"/>
    </location>
</feature>
<feature type="strand" evidence="3">
    <location>
        <begin position="614"/>
        <end position="616"/>
    </location>
</feature>
<feature type="strand" evidence="3">
    <location>
        <begin position="619"/>
        <end position="636"/>
    </location>
</feature>
<feature type="turn" evidence="3">
    <location>
        <begin position="638"/>
        <end position="640"/>
    </location>
</feature>
<feature type="helix" evidence="3">
    <location>
        <begin position="641"/>
        <end position="643"/>
    </location>
</feature>
<feature type="strand" evidence="3">
    <location>
        <begin position="651"/>
        <end position="654"/>
    </location>
</feature>
<feature type="strand" evidence="3">
    <location>
        <begin position="657"/>
        <end position="660"/>
    </location>
</feature>
<feature type="helix" evidence="3">
    <location>
        <begin position="661"/>
        <end position="663"/>
    </location>
</feature>
<feature type="strand" evidence="3">
    <location>
        <begin position="667"/>
        <end position="669"/>
    </location>
</feature>
<feature type="strand" evidence="3">
    <location>
        <begin position="673"/>
        <end position="683"/>
    </location>
</feature>
<feature type="turn" evidence="3">
    <location>
        <begin position="684"/>
        <end position="687"/>
    </location>
</feature>
<feature type="strand" evidence="3">
    <location>
        <begin position="688"/>
        <end position="697"/>
    </location>
</feature>
<feature type="strand" evidence="3">
    <location>
        <begin position="701"/>
        <end position="705"/>
    </location>
</feature>
<feature type="helix" evidence="3">
    <location>
        <begin position="715"/>
        <end position="717"/>
    </location>
</feature>
<feature type="strand" evidence="3">
    <location>
        <begin position="722"/>
        <end position="727"/>
    </location>
</feature>
<feature type="strand" evidence="3">
    <location>
        <begin position="731"/>
        <end position="740"/>
    </location>
</feature>
<feature type="helix" evidence="3">
    <location>
        <begin position="746"/>
        <end position="748"/>
    </location>
</feature>
<feature type="strand" evidence="3">
    <location>
        <begin position="750"/>
        <end position="758"/>
    </location>
</feature>
<feature type="strand" evidence="3">
    <location>
        <begin position="765"/>
        <end position="768"/>
    </location>
</feature>
<feature type="strand" evidence="3">
    <location>
        <begin position="774"/>
        <end position="776"/>
    </location>
</feature>
<feature type="strand" evidence="3">
    <location>
        <begin position="781"/>
        <end position="790"/>
    </location>
</feature>
<organism>
    <name type="scientific">Escherichia coli (strain K12)</name>
    <dbReference type="NCBI Taxonomy" id="83333"/>
    <lineage>
        <taxon>Bacteria</taxon>
        <taxon>Pseudomonadati</taxon>
        <taxon>Pseudomonadota</taxon>
        <taxon>Gammaproteobacteria</taxon>
        <taxon>Enterobacterales</taxon>
        <taxon>Enterobacteriaceae</taxon>
        <taxon>Escherichia</taxon>
    </lineage>
</organism>
<name>YDDB_ECOLI</name>
<protein>
    <recommendedName>
        <fullName>Uncharacterized protein YddB</fullName>
    </recommendedName>
    <alternativeName>
        <fullName>CDS103</fullName>
    </alternativeName>
</protein>
<evidence type="ECO:0000255" key="1">
    <source>
        <dbReference type="PROSITE-ProRule" id="PRU01360"/>
    </source>
</evidence>
<evidence type="ECO:0000305" key="2"/>
<evidence type="ECO:0007829" key="3">
    <source>
        <dbReference type="PDB" id="6OFR"/>
    </source>
</evidence>